<comment type="function">
    <text evidence="1">Displays several functions associated with host defense: it promotes agglutination, bacterial capsular swelling, phagocytosis and complement fixation through its calcium-dependent binding to phosphorylcholine. Can interact with DNA and histones and may scavenge nuclear material released from damaged circulating cells (By similarity).</text>
</comment>
<comment type="cofactor">
    <cofactor evidence="1">
        <name>Ca(2+)</name>
        <dbReference type="ChEBI" id="CHEBI:29108"/>
    </cofactor>
    <text evidence="1">Binds 2 calcium ions per subunit.</text>
</comment>
<comment type="subunit">
    <text evidence="1">Homopentamer. Pentraxin (or pentaxin) have a discoid arrangement of 5 non-covalently bound subunits. Interacts with FCN1; may regulate monocyte activation by FCN1 (By similarity).</text>
</comment>
<comment type="subcellular location">
    <subcellularLocation>
        <location>Secreted</location>
    </subcellularLocation>
</comment>
<comment type="tissue specificity">
    <text>Found in plasma.</text>
</comment>
<comment type="induction">
    <text>The concentration of CRP in plasma increases greatly during acute phase response to tissue injury, infection or other inflammatory stimuli.</text>
</comment>
<comment type="miscellaneous">
    <text>Asp-61, Arg-76, Arg-77, and Glu-81 may be involved in the calcium-dependent binding of phosphorylcholine, a property that may be important for the biological function of this protein.</text>
</comment>
<comment type="similarity">
    <text evidence="4">Belongs to the pentraxin family.</text>
</comment>
<comment type="online information" name="Protein Spotlight">
    <link uri="https://www.proteinspotlight.org/back_issues/030"/>
    <text>No more Christmas pudding? - Issue 30 of January 2003</text>
</comment>
<proteinExistence type="evidence at protein level"/>
<name>CRP_RABIT</name>
<dbReference type="EMBL" id="M14538">
    <property type="protein sequence ID" value="AAA75403.1"/>
    <property type="molecule type" value="Genomic_DNA"/>
</dbReference>
<dbReference type="EMBL" id="L47237">
    <property type="protein sequence ID" value="AAA75404.1"/>
    <property type="molecule type" value="mRNA"/>
</dbReference>
<dbReference type="EMBL" id="M13497">
    <property type="protein sequence ID" value="AAA31206.1"/>
    <property type="molecule type" value="mRNA"/>
</dbReference>
<dbReference type="PIR" id="A25605">
    <property type="entry name" value="CJRB"/>
</dbReference>
<dbReference type="RefSeq" id="NP_001075734.1">
    <property type="nucleotide sequence ID" value="NM_001082265.1"/>
</dbReference>
<dbReference type="SMR" id="P02742"/>
<dbReference type="BioGRID" id="1172114">
    <property type="interactions" value="1"/>
</dbReference>
<dbReference type="FunCoup" id="P02742">
    <property type="interactions" value="14"/>
</dbReference>
<dbReference type="STRING" id="9986.ENSOCUP00000004059"/>
<dbReference type="PaxDb" id="9986-ENSOCUP00000004059"/>
<dbReference type="GeneID" id="100009091"/>
<dbReference type="KEGG" id="ocu:100009091"/>
<dbReference type="CTD" id="1401"/>
<dbReference type="eggNOG" id="ENOG502S201">
    <property type="taxonomic scope" value="Eukaryota"/>
</dbReference>
<dbReference type="InParanoid" id="P02742"/>
<dbReference type="OrthoDB" id="547680at2759"/>
<dbReference type="Proteomes" id="UP000001811">
    <property type="component" value="Unplaced"/>
</dbReference>
<dbReference type="GO" id="GO:0005615">
    <property type="term" value="C:extracellular space"/>
    <property type="evidence" value="ECO:0007669"/>
    <property type="project" value="TreeGrafter"/>
</dbReference>
<dbReference type="GO" id="GO:0001849">
    <property type="term" value="F:complement component C1q complex binding"/>
    <property type="evidence" value="ECO:0007669"/>
    <property type="project" value="TreeGrafter"/>
</dbReference>
<dbReference type="GO" id="GO:0030169">
    <property type="term" value="F:low-density lipoprotein particle binding"/>
    <property type="evidence" value="ECO:0007669"/>
    <property type="project" value="TreeGrafter"/>
</dbReference>
<dbReference type="GO" id="GO:0046872">
    <property type="term" value="F:metal ion binding"/>
    <property type="evidence" value="ECO:0007669"/>
    <property type="project" value="UniProtKB-KW"/>
</dbReference>
<dbReference type="GO" id="GO:0006953">
    <property type="term" value="P:acute-phase response"/>
    <property type="evidence" value="ECO:0007669"/>
    <property type="project" value="UniProtKB-KW"/>
</dbReference>
<dbReference type="GO" id="GO:0045087">
    <property type="term" value="P:innate immune response"/>
    <property type="evidence" value="ECO:0007669"/>
    <property type="project" value="TreeGrafter"/>
</dbReference>
<dbReference type="GO" id="GO:0032677">
    <property type="term" value="P:regulation of interleukin-8 production"/>
    <property type="evidence" value="ECO:0000250"/>
    <property type="project" value="UniProtKB"/>
</dbReference>
<dbReference type="CDD" id="cd00152">
    <property type="entry name" value="PTX"/>
    <property type="match status" value="1"/>
</dbReference>
<dbReference type="FunFam" id="2.60.120.200:FF:000070">
    <property type="entry name" value="Serum amyloid P-component"/>
    <property type="match status" value="1"/>
</dbReference>
<dbReference type="Gene3D" id="2.60.120.200">
    <property type="match status" value="1"/>
</dbReference>
<dbReference type="InterPro" id="IPR013320">
    <property type="entry name" value="ConA-like_dom_sf"/>
</dbReference>
<dbReference type="InterPro" id="IPR030476">
    <property type="entry name" value="Pentaxin_CS"/>
</dbReference>
<dbReference type="InterPro" id="IPR001759">
    <property type="entry name" value="Pentraxin-related"/>
</dbReference>
<dbReference type="InterPro" id="IPR051005">
    <property type="entry name" value="Pentraxin_domain"/>
</dbReference>
<dbReference type="PANTHER" id="PTHR45869:SF7">
    <property type="entry name" value="C-REACTIVE PROTEIN"/>
    <property type="match status" value="1"/>
</dbReference>
<dbReference type="PANTHER" id="PTHR45869">
    <property type="entry name" value="C-REACTIVE PROTEIN-RELATED"/>
    <property type="match status" value="1"/>
</dbReference>
<dbReference type="Pfam" id="PF00354">
    <property type="entry name" value="Pentaxin"/>
    <property type="match status" value="1"/>
</dbReference>
<dbReference type="PRINTS" id="PR00895">
    <property type="entry name" value="PENTAXIN"/>
</dbReference>
<dbReference type="SMART" id="SM00159">
    <property type="entry name" value="PTX"/>
    <property type="match status" value="1"/>
</dbReference>
<dbReference type="SUPFAM" id="SSF49899">
    <property type="entry name" value="Concanavalin A-like lectins/glucanases"/>
    <property type="match status" value="1"/>
</dbReference>
<dbReference type="PROSITE" id="PS00289">
    <property type="entry name" value="PTX_1"/>
    <property type="match status" value="1"/>
</dbReference>
<dbReference type="PROSITE" id="PS51828">
    <property type="entry name" value="PTX_2"/>
    <property type="match status" value="1"/>
</dbReference>
<sequence>MEKLLWCFLTLVSFSNMSDQAGMHKKAFVFPKESDNSYVSLNAQLKKPLKAFTVCLYFYTDLSMTRGYSIFSYATRRQFNEILLFWSKDIGYSFSVGGDEIIFKVSDIPVDPTHLCASWESSTGIAELWVDGKPMVRKSLKKGYILGPEASIILGQDQDSFGGSFEKQQSLVGDIGNVNMWDYALSPEEINTIYAGGTFSPNVLDWRELTYQVRGEVHVKPQLWP</sequence>
<reference key="1">
    <citation type="journal article" date="1986" name="Biochemistry">
        <title>Cloning and characterization of the gene for rabbit C-reactive protein.</title>
        <authorList>
            <person name="Hu S.-I."/>
            <person name="Miller S.M."/>
            <person name="Samols D."/>
        </authorList>
    </citation>
    <scope>NUCLEOTIDE SEQUENCE [GENOMIC DNA]</scope>
    <source>
        <strain>New Zealand white</strain>
        <tissue>Liver</tissue>
    </source>
</reference>
<reference key="2">
    <citation type="journal article" date="1986" name="J. Biol. Chem.">
        <title>Rabbit C-reactive protein. Biosynthesis and characterization of cDNA clones.</title>
        <authorList>
            <person name="Syin C."/>
            <person name="Gotschlich E.C."/>
            <person name="Liu T.-Y."/>
        </authorList>
    </citation>
    <scope>NUCLEOTIDE SEQUENCE [MRNA]</scope>
</reference>
<reference key="3">
    <citation type="journal article" date="1982" name="J. Biol. Chem.">
        <title>Primary structure of rabbit C-reactive protein.</title>
        <authorList>
            <person name="Wang C.-M."/>
            <person name="Nguyen N.Y."/>
            <person name="Yonaha K."/>
            <person name="Robey F."/>
            <person name="Liu T.-Y."/>
        </authorList>
    </citation>
    <scope>PROTEIN SEQUENCE OF 21-225</scope>
</reference>
<keyword id="KW-0011">Acute phase</keyword>
<keyword id="KW-0106">Calcium</keyword>
<keyword id="KW-0903">Direct protein sequencing</keyword>
<keyword id="KW-1015">Disulfide bond</keyword>
<keyword id="KW-0479">Metal-binding</keyword>
<keyword id="KW-1185">Reference proteome</keyword>
<keyword id="KW-0964">Secreted</keyword>
<keyword id="KW-0732">Signal</keyword>
<protein>
    <recommendedName>
        <fullName>C-reactive protein</fullName>
    </recommendedName>
</protein>
<accession>P02742</accession>
<evidence type="ECO:0000250" key="1"/>
<evidence type="ECO:0000255" key="2">
    <source>
        <dbReference type="PROSITE-ProRule" id="PRU01172"/>
    </source>
</evidence>
<evidence type="ECO:0000269" key="3">
    <source>
    </source>
</evidence>
<evidence type="ECO:0000305" key="4"/>
<feature type="signal peptide" evidence="3">
    <location>
        <begin position="1"/>
        <end position="20"/>
    </location>
</feature>
<feature type="chain" id="PRO_0000023531" description="C-reactive protein" evidence="3">
    <location>
        <begin position="21"/>
        <end position="225"/>
    </location>
</feature>
<feature type="domain" description="Pentraxin (PTX)" evidence="2">
    <location>
        <begin position="24"/>
        <end position="225"/>
    </location>
</feature>
<feature type="binding site" evidence="1">
    <location>
        <position position="80"/>
    </location>
    <ligand>
        <name>Ca(2+)</name>
        <dbReference type="ChEBI" id="CHEBI:29108"/>
        <label>1</label>
    </ligand>
</feature>
<feature type="binding site" evidence="1">
    <location>
        <position position="158"/>
    </location>
    <ligand>
        <name>Ca(2+)</name>
        <dbReference type="ChEBI" id="CHEBI:29108"/>
        <label>1</label>
    </ligand>
</feature>
<feature type="binding site" evidence="1">
    <location>
        <position position="159"/>
    </location>
    <ligand>
        <name>Ca(2+)</name>
        <dbReference type="ChEBI" id="CHEBI:29108"/>
        <label>1</label>
    </ligand>
</feature>
<feature type="binding site" evidence="1">
    <location>
        <position position="159"/>
    </location>
    <ligand>
        <name>Ca(2+)</name>
        <dbReference type="ChEBI" id="CHEBI:29108"/>
        <label>2</label>
    </ligand>
</feature>
<feature type="binding site" evidence="1">
    <location>
        <position position="169"/>
    </location>
    <ligand>
        <name>Ca(2+)</name>
        <dbReference type="ChEBI" id="CHEBI:29108"/>
        <label>2</label>
    </ligand>
</feature>
<feature type="disulfide bond" evidence="2 3">
    <location>
        <begin position="55"/>
        <end position="116"/>
    </location>
</feature>
<feature type="sequence variant">
    <original>L</original>
    <variation>K</variation>
    <location>
        <position position="62"/>
    </location>
</feature>
<feature type="sequence variant">
    <original>D</original>
    <variation>V</variation>
    <location>
        <position position="89"/>
    </location>
</feature>
<feature type="sequence conflict" description="In Ref. 2; AAA31206." evidence="4" ref="2">
    <original>T</original>
    <variation>I</variation>
    <location>
        <position position="10"/>
    </location>
</feature>
<feature type="sequence conflict" description="In Ref. 3; AA sequence." evidence="4" ref="3">
    <original>K</original>
    <variation>T</variation>
    <location>
        <position position="46"/>
    </location>
</feature>
<feature type="sequence conflict" description="In Ref. 3; AA sequence." evidence="4" ref="3">
    <original>K</original>
    <variation>L</variation>
    <location>
        <position position="50"/>
    </location>
</feature>
<feature type="sequence conflict" description="In Ref. 1; AAA75404." evidence="4" ref="1">
    <original>R</original>
    <variation>K</variation>
    <location>
        <position position="76"/>
    </location>
</feature>
<feature type="sequence conflict" description="In Ref. 3; AA sequence." evidence="4" ref="3">
    <original>LFWSK</original>
    <variation>FFVKE</variation>
    <location>
        <begin position="84"/>
        <end position="88"/>
    </location>
</feature>
<feature type="sequence conflict" description="In Ref. 3; AA sequence." evidence="4" ref="3">
    <original>G</original>
    <variation>V</variation>
    <location>
        <position position="91"/>
    </location>
</feature>
<feature type="sequence conflict" description="In Ref. 3; AA sequence." evidence="4" ref="3">
    <location>
        <begin position="93"/>
        <end position="101"/>
    </location>
</feature>
<feature type="sequence conflict" description="In Ref. 2; AAA31206." evidence="4" ref="2">
    <original>I</original>
    <variation>V</variation>
    <location>
        <position position="108"/>
    </location>
</feature>
<feature type="sequence conflict" description="In Ref. 3; AA sequence." evidence="4" ref="3">
    <original>K</original>
    <variation>W</variation>
    <location>
        <position position="167"/>
    </location>
</feature>
<feature type="sequence conflict" description="In Ref. 3; AA sequence." evidence="4" ref="3">
    <original>N</original>
    <variation>D</variation>
    <location>
        <position position="177"/>
    </location>
</feature>
<feature type="sequence conflict" description="In Ref. 2; AAA31206." evidence="4" ref="2">
    <original>I</original>
    <variation>V</variation>
    <location>
        <position position="193"/>
    </location>
</feature>
<gene>
    <name type="primary">CRP</name>
    <name type="synonym">PTX1</name>
</gene>
<organism>
    <name type="scientific">Oryctolagus cuniculus</name>
    <name type="common">Rabbit</name>
    <dbReference type="NCBI Taxonomy" id="9986"/>
    <lineage>
        <taxon>Eukaryota</taxon>
        <taxon>Metazoa</taxon>
        <taxon>Chordata</taxon>
        <taxon>Craniata</taxon>
        <taxon>Vertebrata</taxon>
        <taxon>Euteleostomi</taxon>
        <taxon>Mammalia</taxon>
        <taxon>Eutheria</taxon>
        <taxon>Euarchontoglires</taxon>
        <taxon>Glires</taxon>
        <taxon>Lagomorpha</taxon>
        <taxon>Leporidae</taxon>
        <taxon>Oryctolagus</taxon>
    </lineage>
</organism>